<evidence type="ECO:0000250" key="1">
    <source>
        <dbReference type="UniProtKB" id="Q7L592"/>
    </source>
</evidence>
<evidence type="ECO:0000256" key="2">
    <source>
        <dbReference type="SAM" id="MobiDB-lite"/>
    </source>
</evidence>
<evidence type="ECO:0000305" key="3"/>
<organism>
    <name type="scientific">Drosophila melanogaster</name>
    <name type="common">Fruit fly</name>
    <dbReference type="NCBI Taxonomy" id="7227"/>
    <lineage>
        <taxon>Eukaryota</taxon>
        <taxon>Metazoa</taxon>
        <taxon>Ecdysozoa</taxon>
        <taxon>Arthropoda</taxon>
        <taxon>Hexapoda</taxon>
        <taxon>Insecta</taxon>
        <taxon>Pterygota</taxon>
        <taxon>Neoptera</taxon>
        <taxon>Endopterygota</taxon>
        <taxon>Diptera</taxon>
        <taxon>Brachycera</taxon>
        <taxon>Muscomorpha</taxon>
        <taxon>Ephydroidea</taxon>
        <taxon>Drosophilidae</taxon>
        <taxon>Drosophila</taxon>
        <taxon>Sophophora</taxon>
    </lineage>
</organism>
<name>NDUF7_DROME</name>
<keyword id="KW-0489">Methyltransferase</keyword>
<keyword id="KW-0496">Mitochondrion</keyword>
<keyword id="KW-1185">Reference proteome</keyword>
<keyword id="KW-0808">Transferase</keyword>
<accession>Q9VGR2</accession>
<accession>Q6NLJ4</accession>
<accession>Q8MYZ3</accession>
<accession>Q95S80</accession>
<sequence length="437" mass="49068">MLREALRIGNRRWYSYKSVRRPNLGATGTPKMEPPKEQPEASSKAESGHGSLAKQLRAKILSTGPIPVAEYMREVLTNPQAGYYMNRDVFGREGDFITSPEISQIFGELVGIWLVSEWRKMGSPSPFQLVELGPGRGTLARDVLKVLTKFKQDAEFSMHMVEVSPFLSKAQAQRFCYSHQTLPEDAQLPHYQEGTTASGTKAFWHRRLEDVPQGFSLVLAHEFFDALPVHKLQLVDGKWQEVLIDVASSDGAQEASFRYVLSRSQTPVSSLYRPLPGETRSCLEHSLETERQVGLLAERIERDGGIALIMDYGHFGEKTDTFRAFKQHKLHDPLVEPGSADLTADVDFKLVRHIAETRGNVHCCGPVEQGLFLQRMQGEARLEQLLAHALPENQEIIRSGYEMLTDPAQMGTRFKFLAMFPGVLAAHLDKYPVVGFS</sequence>
<comment type="function">
    <text evidence="1">Arginine methyltransferase involved in the assembly or stability of mitochondrial NADH:ubiquinone oxidoreductase complex (complex I).</text>
</comment>
<comment type="catalytic activity">
    <reaction evidence="1">
        <text>L-arginyl-[protein] + 2 S-adenosyl-L-methionine = N(omega),N(omega)'-dimethyl-L-arginyl-[protein] + 2 S-adenosyl-L-homocysteine + 2 H(+)</text>
        <dbReference type="Rhea" id="RHEA:48108"/>
        <dbReference type="Rhea" id="RHEA-COMP:10532"/>
        <dbReference type="Rhea" id="RHEA-COMP:11992"/>
        <dbReference type="ChEBI" id="CHEBI:15378"/>
        <dbReference type="ChEBI" id="CHEBI:29965"/>
        <dbReference type="ChEBI" id="CHEBI:57856"/>
        <dbReference type="ChEBI" id="CHEBI:59789"/>
        <dbReference type="ChEBI" id="CHEBI:88221"/>
        <dbReference type="EC" id="2.1.1.320"/>
    </reaction>
</comment>
<comment type="subcellular location">
    <subcellularLocation>
        <location evidence="1">Mitochondrion</location>
    </subcellularLocation>
</comment>
<comment type="similarity">
    <text evidence="3">Belongs to the NDUFAF7 family.</text>
</comment>
<comment type="sequence caution" evidence="3">
    <conflict type="erroneous initiation">
        <sequence resource="EMBL-CDS" id="AAL28469"/>
    </conflict>
</comment>
<comment type="sequence caution" evidence="3">
    <conflict type="erroneous termination">
        <sequence resource="EMBL-CDS" id="AAM29473"/>
    </conflict>
    <text>Truncated C-terminus.</text>
</comment>
<dbReference type="EC" id="2.1.1.320" evidence="1"/>
<dbReference type="EMBL" id="AE014297">
    <property type="protein sequence ID" value="AAF54614.1"/>
    <property type="molecule type" value="Genomic_DNA"/>
</dbReference>
<dbReference type="EMBL" id="AY060921">
    <property type="protein sequence ID" value="AAL28469.1"/>
    <property type="status" value="ALT_INIT"/>
    <property type="molecule type" value="mRNA"/>
</dbReference>
<dbReference type="EMBL" id="AY113468">
    <property type="protein sequence ID" value="AAM29473.1"/>
    <property type="status" value="ALT_SEQ"/>
    <property type="molecule type" value="mRNA"/>
</dbReference>
<dbReference type="EMBL" id="BT012337">
    <property type="protein sequence ID" value="AAS77462.1"/>
    <property type="molecule type" value="mRNA"/>
</dbReference>
<dbReference type="RefSeq" id="NP_650054.2">
    <property type="nucleotide sequence ID" value="NM_141797.4"/>
</dbReference>
<dbReference type="SMR" id="Q9VGR2"/>
<dbReference type="BioGRID" id="66483">
    <property type="interactions" value="2"/>
</dbReference>
<dbReference type="FunCoup" id="Q9VGR2">
    <property type="interactions" value="1353"/>
</dbReference>
<dbReference type="IntAct" id="Q9VGR2">
    <property type="interactions" value="3"/>
</dbReference>
<dbReference type="STRING" id="7227.FBpp0081828"/>
<dbReference type="PaxDb" id="7227-FBpp0081828"/>
<dbReference type="DNASU" id="41349"/>
<dbReference type="EnsemblMetazoa" id="FBtr0082352">
    <property type="protein sequence ID" value="FBpp0081828"/>
    <property type="gene ID" value="FBgn0037880"/>
</dbReference>
<dbReference type="GeneID" id="41349"/>
<dbReference type="KEGG" id="dme:Dmel_CG17726"/>
<dbReference type="UCSC" id="CG17726-RA">
    <property type="organism name" value="d. melanogaster"/>
</dbReference>
<dbReference type="AGR" id="FB:FBgn0037880"/>
<dbReference type="FlyBase" id="FBgn0037880">
    <property type="gene designation" value="CG17726"/>
</dbReference>
<dbReference type="VEuPathDB" id="VectorBase:FBgn0037880"/>
<dbReference type="eggNOG" id="KOG2901">
    <property type="taxonomic scope" value="Eukaryota"/>
</dbReference>
<dbReference type="GeneTree" id="ENSGT00390000001588"/>
<dbReference type="HOGENOM" id="CLU_024840_3_1_1"/>
<dbReference type="InParanoid" id="Q9VGR2"/>
<dbReference type="OMA" id="YYHPQRN"/>
<dbReference type="OrthoDB" id="438553at2759"/>
<dbReference type="PhylomeDB" id="Q9VGR2"/>
<dbReference type="Reactome" id="R-DME-6799198">
    <property type="pathway name" value="Complex I biogenesis"/>
</dbReference>
<dbReference type="BioGRID-ORCS" id="41349">
    <property type="hits" value="1 hit in 1 CRISPR screen"/>
</dbReference>
<dbReference type="GenomeRNAi" id="41349"/>
<dbReference type="PRO" id="PR:Q9VGR2"/>
<dbReference type="Proteomes" id="UP000000803">
    <property type="component" value="Chromosome 3R"/>
</dbReference>
<dbReference type="Bgee" id="FBgn0037880">
    <property type="expression patterns" value="Expressed in adult antennal lobe projection neuron adPN (Drosophila) in brain and 39 other cell types or tissues"/>
</dbReference>
<dbReference type="ExpressionAtlas" id="Q9VGR2">
    <property type="expression patterns" value="baseline and differential"/>
</dbReference>
<dbReference type="GO" id="GO:0005739">
    <property type="term" value="C:mitochondrion"/>
    <property type="evidence" value="ECO:0000250"/>
    <property type="project" value="UniProtKB"/>
</dbReference>
<dbReference type="GO" id="GO:0035243">
    <property type="term" value="F:protein-arginine omega-N symmetric methyltransferase activity"/>
    <property type="evidence" value="ECO:0000318"/>
    <property type="project" value="GO_Central"/>
</dbReference>
<dbReference type="GO" id="GO:0032259">
    <property type="term" value="P:methylation"/>
    <property type="evidence" value="ECO:0007669"/>
    <property type="project" value="UniProtKB-KW"/>
</dbReference>
<dbReference type="GO" id="GO:0032981">
    <property type="term" value="P:mitochondrial respiratory chain complex I assembly"/>
    <property type="evidence" value="ECO:0000250"/>
    <property type="project" value="UniProtKB"/>
</dbReference>
<dbReference type="FunFam" id="3.40.50.12710:FF:000009">
    <property type="entry name" value="Protein arginine methyltransferase NDUFAF7"/>
    <property type="match status" value="1"/>
</dbReference>
<dbReference type="Gene3D" id="3.40.50.12710">
    <property type="match status" value="1"/>
</dbReference>
<dbReference type="InterPro" id="IPR003788">
    <property type="entry name" value="NDUFAF7"/>
</dbReference>
<dbReference type="InterPro" id="IPR038375">
    <property type="entry name" value="NDUFAF7_sf"/>
</dbReference>
<dbReference type="InterPro" id="IPR029063">
    <property type="entry name" value="SAM-dependent_MTases_sf"/>
</dbReference>
<dbReference type="PANTHER" id="PTHR12049">
    <property type="entry name" value="PROTEIN ARGININE METHYLTRANSFERASE NDUFAF7, MITOCHONDRIAL"/>
    <property type="match status" value="1"/>
</dbReference>
<dbReference type="PANTHER" id="PTHR12049:SF7">
    <property type="entry name" value="PROTEIN ARGININE METHYLTRANSFERASE NDUFAF7, MITOCHONDRIAL"/>
    <property type="match status" value="1"/>
</dbReference>
<dbReference type="Pfam" id="PF02636">
    <property type="entry name" value="Methyltransf_28"/>
    <property type="match status" value="1"/>
</dbReference>
<dbReference type="SUPFAM" id="SSF53335">
    <property type="entry name" value="S-adenosyl-L-methionine-dependent methyltransferases"/>
    <property type="match status" value="1"/>
</dbReference>
<proteinExistence type="evidence at transcript level"/>
<reference key="1">
    <citation type="journal article" date="2000" name="Science">
        <title>The genome sequence of Drosophila melanogaster.</title>
        <authorList>
            <person name="Adams M.D."/>
            <person name="Celniker S.E."/>
            <person name="Holt R.A."/>
            <person name="Evans C.A."/>
            <person name="Gocayne J.D."/>
            <person name="Amanatides P.G."/>
            <person name="Scherer S.E."/>
            <person name="Li P.W."/>
            <person name="Hoskins R.A."/>
            <person name="Galle R.F."/>
            <person name="George R.A."/>
            <person name="Lewis S.E."/>
            <person name="Richards S."/>
            <person name="Ashburner M."/>
            <person name="Henderson S.N."/>
            <person name="Sutton G.G."/>
            <person name="Wortman J.R."/>
            <person name="Yandell M.D."/>
            <person name="Zhang Q."/>
            <person name="Chen L.X."/>
            <person name="Brandon R.C."/>
            <person name="Rogers Y.-H.C."/>
            <person name="Blazej R.G."/>
            <person name="Champe M."/>
            <person name="Pfeiffer B.D."/>
            <person name="Wan K.H."/>
            <person name="Doyle C."/>
            <person name="Baxter E.G."/>
            <person name="Helt G."/>
            <person name="Nelson C.R."/>
            <person name="Miklos G.L.G."/>
            <person name="Abril J.F."/>
            <person name="Agbayani A."/>
            <person name="An H.-J."/>
            <person name="Andrews-Pfannkoch C."/>
            <person name="Baldwin D."/>
            <person name="Ballew R.M."/>
            <person name="Basu A."/>
            <person name="Baxendale J."/>
            <person name="Bayraktaroglu L."/>
            <person name="Beasley E.M."/>
            <person name="Beeson K.Y."/>
            <person name="Benos P.V."/>
            <person name="Berman B.P."/>
            <person name="Bhandari D."/>
            <person name="Bolshakov S."/>
            <person name="Borkova D."/>
            <person name="Botchan M.R."/>
            <person name="Bouck J."/>
            <person name="Brokstein P."/>
            <person name="Brottier P."/>
            <person name="Burtis K.C."/>
            <person name="Busam D.A."/>
            <person name="Butler H."/>
            <person name="Cadieu E."/>
            <person name="Center A."/>
            <person name="Chandra I."/>
            <person name="Cherry J.M."/>
            <person name="Cawley S."/>
            <person name="Dahlke C."/>
            <person name="Davenport L.B."/>
            <person name="Davies P."/>
            <person name="de Pablos B."/>
            <person name="Delcher A."/>
            <person name="Deng Z."/>
            <person name="Mays A.D."/>
            <person name="Dew I."/>
            <person name="Dietz S.M."/>
            <person name="Dodson K."/>
            <person name="Doup L.E."/>
            <person name="Downes M."/>
            <person name="Dugan-Rocha S."/>
            <person name="Dunkov B.C."/>
            <person name="Dunn P."/>
            <person name="Durbin K.J."/>
            <person name="Evangelista C.C."/>
            <person name="Ferraz C."/>
            <person name="Ferriera S."/>
            <person name="Fleischmann W."/>
            <person name="Fosler C."/>
            <person name="Gabrielian A.E."/>
            <person name="Garg N.S."/>
            <person name="Gelbart W.M."/>
            <person name="Glasser K."/>
            <person name="Glodek A."/>
            <person name="Gong F."/>
            <person name="Gorrell J.H."/>
            <person name="Gu Z."/>
            <person name="Guan P."/>
            <person name="Harris M."/>
            <person name="Harris N.L."/>
            <person name="Harvey D.A."/>
            <person name="Heiman T.J."/>
            <person name="Hernandez J.R."/>
            <person name="Houck J."/>
            <person name="Hostin D."/>
            <person name="Houston K.A."/>
            <person name="Howland T.J."/>
            <person name="Wei M.-H."/>
            <person name="Ibegwam C."/>
            <person name="Jalali M."/>
            <person name="Kalush F."/>
            <person name="Karpen G.H."/>
            <person name="Ke Z."/>
            <person name="Kennison J.A."/>
            <person name="Ketchum K.A."/>
            <person name="Kimmel B.E."/>
            <person name="Kodira C.D."/>
            <person name="Kraft C.L."/>
            <person name="Kravitz S."/>
            <person name="Kulp D."/>
            <person name="Lai Z."/>
            <person name="Lasko P."/>
            <person name="Lei Y."/>
            <person name="Levitsky A.A."/>
            <person name="Li J.H."/>
            <person name="Li Z."/>
            <person name="Liang Y."/>
            <person name="Lin X."/>
            <person name="Liu X."/>
            <person name="Mattei B."/>
            <person name="McIntosh T.C."/>
            <person name="McLeod M.P."/>
            <person name="McPherson D."/>
            <person name="Merkulov G."/>
            <person name="Milshina N.V."/>
            <person name="Mobarry C."/>
            <person name="Morris J."/>
            <person name="Moshrefi A."/>
            <person name="Mount S.M."/>
            <person name="Moy M."/>
            <person name="Murphy B."/>
            <person name="Murphy L."/>
            <person name="Muzny D.M."/>
            <person name="Nelson D.L."/>
            <person name="Nelson D.R."/>
            <person name="Nelson K.A."/>
            <person name="Nixon K."/>
            <person name="Nusskern D.R."/>
            <person name="Pacleb J.M."/>
            <person name="Palazzolo M."/>
            <person name="Pittman G.S."/>
            <person name="Pan S."/>
            <person name="Pollard J."/>
            <person name="Puri V."/>
            <person name="Reese M.G."/>
            <person name="Reinert K."/>
            <person name="Remington K."/>
            <person name="Saunders R.D.C."/>
            <person name="Scheeler F."/>
            <person name="Shen H."/>
            <person name="Shue B.C."/>
            <person name="Siden-Kiamos I."/>
            <person name="Simpson M."/>
            <person name="Skupski M.P."/>
            <person name="Smith T.J."/>
            <person name="Spier E."/>
            <person name="Spradling A.C."/>
            <person name="Stapleton M."/>
            <person name="Strong R."/>
            <person name="Sun E."/>
            <person name="Svirskas R."/>
            <person name="Tector C."/>
            <person name="Turner R."/>
            <person name="Venter E."/>
            <person name="Wang A.H."/>
            <person name="Wang X."/>
            <person name="Wang Z.-Y."/>
            <person name="Wassarman D.A."/>
            <person name="Weinstock G.M."/>
            <person name="Weissenbach J."/>
            <person name="Williams S.M."/>
            <person name="Woodage T."/>
            <person name="Worley K.C."/>
            <person name="Wu D."/>
            <person name="Yang S."/>
            <person name="Yao Q.A."/>
            <person name="Ye J."/>
            <person name="Yeh R.-F."/>
            <person name="Zaveri J.S."/>
            <person name="Zhan M."/>
            <person name="Zhang G."/>
            <person name="Zhao Q."/>
            <person name="Zheng L."/>
            <person name="Zheng X.H."/>
            <person name="Zhong F.N."/>
            <person name="Zhong W."/>
            <person name="Zhou X."/>
            <person name="Zhu S.C."/>
            <person name="Zhu X."/>
            <person name="Smith H.O."/>
            <person name="Gibbs R.A."/>
            <person name="Myers E.W."/>
            <person name="Rubin G.M."/>
            <person name="Venter J.C."/>
        </authorList>
    </citation>
    <scope>NUCLEOTIDE SEQUENCE [LARGE SCALE GENOMIC DNA]</scope>
    <source>
        <strain>Berkeley</strain>
    </source>
</reference>
<reference key="2">
    <citation type="journal article" date="2002" name="Genome Biol.">
        <title>Annotation of the Drosophila melanogaster euchromatic genome: a systematic review.</title>
        <authorList>
            <person name="Misra S."/>
            <person name="Crosby M.A."/>
            <person name="Mungall C.J."/>
            <person name="Matthews B.B."/>
            <person name="Campbell K.S."/>
            <person name="Hradecky P."/>
            <person name="Huang Y."/>
            <person name="Kaminker J.S."/>
            <person name="Millburn G.H."/>
            <person name="Prochnik S.E."/>
            <person name="Smith C.D."/>
            <person name="Tupy J.L."/>
            <person name="Whitfield E.J."/>
            <person name="Bayraktaroglu L."/>
            <person name="Berman B.P."/>
            <person name="Bettencourt B.R."/>
            <person name="Celniker S.E."/>
            <person name="de Grey A.D.N.J."/>
            <person name="Drysdale R.A."/>
            <person name="Harris N.L."/>
            <person name="Richter J."/>
            <person name="Russo S."/>
            <person name="Schroeder A.J."/>
            <person name="Shu S.Q."/>
            <person name="Stapleton M."/>
            <person name="Yamada C."/>
            <person name="Ashburner M."/>
            <person name="Gelbart W.M."/>
            <person name="Rubin G.M."/>
            <person name="Lewis S.E."/>
        </authorList>
    </citation>
    <scope>GENOME REANNOTATION</scope>
    <source>
        <strain>Berkeley</strain>
    </source>
</reference>
<reference key="3">
    <citation type="journal article" date="2002" name="Genome Biol.">
        <title>A Drosophila full-length cDNA resource.</title>
        <authorList>
            <person name="Stapleton M."/>
            <person name="Carlson J.W."/>
            <person name="Brokstein P."/>
            <person name="Yu C."/>
            <person name="Champe M."/>
            <person name="George R.A."/>
            <person name="Guarin H."/>
            <person name="Kronmiller B."/>
            <person name="Pacleb J.M."/>
            <person name="Park S."/>
            <person name="Wan K.H."/>
            <person name="Rubin G.M."/>
            <person name="Celniker S.E."/>
        </authorList>
    </citation>
    <scope>NUCLEOTIDE SEQUENCE [LARGE SCALE MRNA]</scope>
    <source>
        <strain>Berkeley</strain>
        <tissue>Head</tissue>
    </source>
</reference>
<reference key="4">
    <citation type="submission" date="2004-03" db="EMBL/GenBank/DDBJ databases">
        <authorList>
            <person name="Stapleton M."/>
            <person name="Carlson J.W."/>
            <person name="Chavez C."/>
            <person name="Frise E."/>
            <person name="George R.A."/>
            <person name="Pacleb J.M."/>
            <person name="Park S."/>
            <person name="Wan K.H."/>
            <person name="Yu C."/>
            <person name="Rubin G.M."/>
            <person name="Celniker S.E."/>
        </authorList>
    </citation>
    <scope>NUCLEOTIDE SEQUENCE [LARGE SCALE MRNA]</scope>
    <source>
        <strain>Berkeley</strain>
        <tissue>Testis</tissue>
    </source>
</reference>
<feature type="chain" id="PRO_0000315679" description="Protein arginine methyltransferase NDUFAF7 homolog, mitochondrial">
    <location>
        <begin position="1"/>
        <end position="437"/>
    </location>
</feature>
<feature type="region of interest" description="Disordered" evidence="2">
    <location>
        <begin position="21"/>
        <end position="49"/>
    </location>
</feature>
<feature type="sequence conflict" description="In Ref. 4; AAS77462." evidence="3" ref="4">
    <original>L</original>
    <variation>P</variation>
    <location>
        <position position="275"/>
    </location>
</feature>
<feature type="sequence conflict" description="In Ref. 4; AAS77462." evidence="3" ref="4">
    <original>T</original>
    <variation>P</variation>
    <location>
        <position position="319"/>
    </location>
</feature>
<feature type="sequence conflict" description="In Ref. 4; AAS77462." evidence="3" ref="4">
    <original>K</original>
    <variation>E</variation>
    <location>
        <position position="329"/>
    </location>
</feature>
<feature type="sequence conflict" description="In Ref. 4; AAS77462." evidence="3" ref="4">
    <original>S</original>
    <variation>R</variation>
    <location>
        <position position="339"/>
    </location>
</feature>
<gene>
    <name type="ORF">CG17726</name>
</gene>
<protein>
    <recommendedName>
        <fullName evidence="1">Protein arginine methyltransferase NDUFAF7 homolog, mitochondrial</fullName>
        <ecNumber evidence="1">2.1.1.320</ecNumber>
    </recommendedName>
    <alternativeName>
        <fullName>NADH dehydrogenase [ubiquinone] complex I, assembly factor 7 homolog</fullName>
    </alternativeName>
    <alternativeName>
        <fullName>Protein midA homolog</fullName>
    </alternativeName>
</protein>